<gene>
    <name evidence="1" type="primary">ruvB</name>
    <name type="ordered locus">BG0022</name>
</gene>
<protein>
    <recommendedName>
        <fullName evidence="1">Holliday junction branch migration complex subunit RuvB</fullName>
        <ecNumber evidence="1">3.6.4.-</ecNumber>
    </recommendedName>
</protein>
<sequence length="347" mass="39020">MKDENSINFLSSNESYLYDKSENELRPKVFEDFKGQVNVKETLSIFIRASKERGEALDHVFLSGPPGLGKTTLASIIAFEMNASIKITSAPAFDKPKDIIGILTGLDEKSILFIDEIHRLRPIIEEMLCIAMEDYELDWVIGQGANARTVRMPLPKFTLIGATTKPGKVTSPLYARFGITARFELYSEIELVEIIKRNSIILNIEIEEDAAFLLARSSRGTPRIANRLLRRIRDIAQVTGSLVVTSDIVSIGLEMLRIDGEGLDEQDRNILRSLILKFNGGPVGVDTLAISVGETADSLEDFYEPYLIMKGFINRTHRGRKATEFAYLHLNLEMKEEDISENQRVSF</sequence>
<proteinExistence type="inferred from homology"/>
<dbReference type="EC" id="3.6.4.-" evidence="1"/>
<dbReference type="EMBL" id="CP000013">
    <property type="protein sequence ID" value="AAU06881.1"/>
    <property type="molecule type" value="Genomic_DNA"/>
</dbReference>
<dbReference type="RefSeq" id="WP_011193376.1">
    <property type="nucleotide sequence ID" value="NZ_CP028872.1"/>
</dbReference>
<dbReference type="SMR" id="Q662Z0"/>
<dbReference type="GeneID" id="45160821"/>
<dbReference type="KEGG" id="bga:BG0022"/>
<dbReference type="eggNOG" id="COG2255">
    <property type="taxonomic scope" value="Bacteria"/>
</dbReference>
<dbReference type="HOGENOM" id="CLU_055599_1_0_12"/>
<dbReference type="OrthoDB" id="9804478at2"/>
<dbReference type="Proteomes" id="UP000002276">
    <property type="component" value="Chromosome"/>
</dbReference>
<dbReference type="GO" id="GO:0005737">
    <property type="term" value="C:cytoplasm"/>
    <property type="evidence" value="ECO:0007669"/>
    <property type="project" value="UniProtKB-SubCell"/>
</dbReference>
<dbReference type="GO" id="GO:0048476">
    <property type="term" value="C:Holliday junction resolvase complex"/>
    <property type="evidence" value="ECO:0007669"/>
    <property type="project" value="UniProtKB-UniRule"/>
</dbReference>
<dbReference type="GO" id="GO:0005524">
    <property type="term" value="F:ATP binding"/>
    <property type="evidence" value="ECO:0007669"/>
    <property type="project" value="UniProtKB-UniRule"/>
</dbReference>
<dbReference type="GO" id="GO:0016887">
    <property type="term" value="F:ATP hydrolysis activity"/>
    <property type="evidence" value="ECO:0007669"/>
    <property type="project" value="InterPro"/>
</dbReference>
<dbReference type="GO" id="GO:0000400">
    <property type="term" value="F:four-way junction DNA binding"/>
    <property type="evidence" value="ECO:0007669"/>
    <property type="project" value="UniProtKB-UniRule"/>
</dbReference>
<dbReference type="GO" id="GO:0009378">
    <property type="term" value="F:four-way junction helicase activity"/>
    <property type="evidence" value="ECO:0007669"/>
    <property type="project" value="InterPro"/>
</dbReference>
<dbReference type="GO" id="GO:0006310">
    <property type="term" value="P:DNA recombination"/>
    <property type="evidence" value="ECO:0007669"/>
    <property type="project" value="UniProtKB-UniRule"/>
</dbReference>
<dbReference type="GO" id="GO:0006281">
    <property type="term" value="P:DNA repair"/>
    <property type="evidence" value="ECO:0007669"/>
    <property type="project" value="UniProtKB-UniRule"/>
</dbReference>
<dbReference type="CDD" id="cd00009">
    <property type="entry name" value="AAA"/>
    <property type="match status" value="1"/>
</dbReference>
<dbReference type="Gene3D" id="1.10.8.60">
    <property type="match status" value="1"/>
</dbReference>
<dbReference type="Gene3D" id="3.40.50.300">
    <property type="entry name" value="P-loop containing nucleotide triphosphate hydrolases"/>
    <property type="match status" value="1"/>
</dbReference>
<dbReference type="Gene3D" id="1.10.10.10">
    <property type="entry name" value="Winged helix-like DNA-binding domain superfamily/Winged helix DNA-binding domain"/>
    <property type="match status" value="1"/>
</dbReference>
<dbReference type="HAMAP" id="MF_00016">
    <property type="entry name" value="DNA_HJ_migration_RuvB"/>
    <property type="match status" value="1"/>
</dbReference>
<dbReference type="InterPro" id="IPR003593">
    <property type="entry name" value="AAA+_ATPase"/>
</dbReference>
<dbReference type="InterPro" id="IPR041445">
    <property type="entry name" value="AAA_lid_4"/>
</dbReference>
<dbReference type="InterPro" id="IPR004605">
    <property type="entry name" value="DNA_helicase_Holl-junc_RuvB"/>
</dbReference>
<dbReference type="InterPro" id="IPR027417">
    <property type="entry name" value="P-loop_NTPase"/>
</dbReference>
<dbReference type="InterPro" id="IPR008824">
    <property type="entry name" value="RuvB-like_N"/>
</dbReference>
<dbReference type="InterPro" id="IPR008823">
    <property type="entry name" value="RuvB_C"/>
</dbReference>
<dbReference type="InterPro" id="IPR036388">
    <property type="entry name" value="WH-like_DNA-bd_sf"/>
</dbReference>
<dbReference type="InterPro" id="IPR036390">
    <property type="entry name" value="WH_DNA-bd_sf"/>
</dbReference>
<dbReference type="NCBIfam" id="NF000868">
    <property type="entry name" value="PRK00080.1"/>
    <property type="match status" value="1"/>
</dbReference>
<dbReference type="NCBIfam" id="TIGR00635">
    <property type="entry name" value="ruvB"/>
    <property type="match status" value="1"/>
</dbReference>
<dbReference type="PANTHER" id="PTHR42848">
    <property type="match status" value="1"/>
</dbReference>
<dbReference type="PANTHER" id="PTHR42848:SF1">
    <property type="entry name" value="HOLLIDAY JUNCTION BRANCH MIGRATION COMPLEX SUBUNIT RUVB"/>
    <property type="match status" value="1"/>
</dbReference>
<dbReference type="Pfam" id="PF17864">
    <property type="entry name" value="AAA_lid_4"/>
    <property type="match status" value="1"/>
</dbReference>
<dbReference type="Pfam" id="PF05491">
    <property type="entry name" value="RuvB_C"/>
    <property type="match status" value="1"/>
</dbReference>
<dbReference type="Pfam" id="PF05496">
    <property type="entry name" value="RuvB_N"/>
    <property type="match status" value="1"/>
</dbReference>
<dbReference type="SMART" id="SM00382">
    <property type="entry name" value="AAA"/>
    <property type="match status" value="1"/>
</dbReference>
<dbReference type="SUPFAM" id="SSF52540">
    <property type="entry name" value="P-loop containing nucleoside triphosphate hydrolases"/>
    <property type="match status" value="1"/>
</dbReference>
<dbReference type="SUPFAM" id="SSF46785">
    <property type="entry name" value="Winged helix' DNA-binding domain"/>
    <property type="match status" value="1"/>
</dbReference>
<organism>
    <name type="scientific">Borrelia garinii subsp. bavariensis (strain ATCC BAA-2496 / DSM 23469 / PBi)</name>
    <name type="common">Borreliella bavariensis</name>
    <dbReference type="NCBI Taxonomy" id="290434"/>
    <lineage>
        <taxon>Bacteria</taxon>
        <taxon>Pseudomonadati</taxon>
        <taxon>Spirochaetota</taxon>
        <taxon>Spirochaetia</taxon>
        <taxon>Spirochaetales</taxon>
        <taxon>Borreliaceae</taxon>
        <taxon>Borreliella</taxon>
    </lineage>
</organism>
<keyword id="KW-0067">ATP-binding</keyword>
<keyword id="KW-0963">Cytoplasm</keyword>
<keyword id="KW-0227">DNA damage</keyword>
<keyword id="KW-0233">DNA recombination</keyword>
<keyword id="KW-0234">DNA repair</keyword>
<keyword id="KW-0238">DNA-binding</keyword>
<keyword id="KW-0378">Hydrolase</keyword>
<keyword id="KW-0547">Nucleotide-binding</keyword>
<name>RUVB_BORGP</name>
<reference key="1">
    <citation type="journal article" date="2004" name="Nucleic Acids Res.">
        <title>Comparative analysis of the Borrelia garinii genome.</title>
        <authorList>
            <person name="Gloeckner G."/>
            <person name="Lehmann R."/>
            <person name="Romualdi A."/>
            <person name="Pradella S."/>
            <person name="Schulte-Spechtel U."/>
            <person name="Schilhabel M."/>
            <person name="Wilske B."/>
            <person name="Suehnel J."/>
            <person name="Platzer M."/>
        </authorList>
    </citation>
    <scope>NUCLEOTIDE SEQUENCE [LARGE SCALE GENOMIC DNA]</scope>
    <source>
        <strain>ATCC BAA-2496 / DSM 23469 / PBi</strain>
    </source>
</reference>
<evidence type="ECO:0000255" key="1">
    <source>
        <dbReference type="HAMAP-Rule" id="MF_00016"/>
    </source>
</evidence>
<comment type="function">
    <text evidence="1">The RuvA-RuvB-RuvC complex processes Holliday junction (HJ) DNA during genetic recombination and DNA repair, while the RuvA-RuvB complex plays an important role in the rescue of blocked DNA replication forks via replication fork reversal (RFR). RuvA specifically binds to HJ cruciform DNA, conferring on it an open structure. The RuvB hexamer acts as an ATP-dependent pump, pulling dsDNA into and through the RuvAB complex. RuvB forms 2 homohexamers on either side of HJ DNA bound by 1 or 2 RuvA tetramers; 4 subunits per hexamer contact DNA at a time. Coordinated motions by a converter formed by DNA-disengaged RuvB subunits stimulates ATP hydrolysis and nucleotide exchange. Immobilization of the converter enables RuvB to convert the ATP-contained energy into a lever motion, pulling 2 nucleotides of DNA out of the RuvA tetramer per ATP hydrolyzed, thus driving DNA branch migration. The RuvB motors rotate together with the DNA substrate, which together with the progressing nucleotide cycle form the mechanistic basis for DNA recombination by continuous HJ branch migration. Branch migration allows RuvC to scan DNA until it finds its consensus sequence, where it cleaves and resolves cruciform DNA.</text>
</comment>
<comment type="catalytic activity">
    <reaction evidence="1">
        <text>ATP + H2O = ADP + phosphate + H(+)</text>
        <dbReference type="Rhea" id="RHEA:13065"/>
        <dbReference type="ChEBI" id="CHEBI:15377"/>
        <dbReference type="ChEBI" id="CHEBI:15378"/>
        <dbReference type="ChEBI" id="CHEBI:30616"/>
        <dbReference type="ChEBI" id="CHEBI:43474"/>
        <dbReference type="ChEBI" id="CHEBI:456216"/>
    </reaction>
</comment>
<comment type="subunit">
    <text evidence="1">Homohexamer. Forms an RuvA(8)-RuvB(12)-Holliday junction (HJ) complex. HJ DNA is sandwiched between 2 RuvA tetramers; dsDNA enters through RuvA and exits via RuvB. An RuvB hexamer assembles on each DNA strand where it exits the tetramer. Each RuvB hexamer is contacted by two RuvA subunits (via domain III) on 2 adjacent RuvB subunits; this complex drives branch migration. In the full resolvosome a probable DNA-RuvA(4)-RuvB(12)-RuvC(2) complex forms which resolves the HJ.</text>
</comment>
<comment type="subcellular location">
    <subcellularLocation>
        <location evidence="1">Cytoplasm</location>
    </subcellularLocation>
</comment>
<comment type="domain">
    <text evidence="1">Has 3 domains, the large (RuvB-L) and small ATPase (RuvB-S) domains and the C-terminal head (RuvB-H) domain. The head domain binds DNA, while the ATPase domains jointly bind ATP, ADP or are empty depending on the state of the subunit in the translocation cycle. During a single DNA translocation step the structure of each domain remains the same, but their relative positions change.</text>
</comment>
<comment type="similarity">
    <text evidence="1">Belongs to the RuvB family.</text>
</comment>
<accession>Q662Z0</accession>
<feature type="chain" id="PRO_0000165501" description="Holliday junction branch migration complex subunit RuvB">
    <location>
        <begin position="1"/>
        <end position="347"/>
    </location>
</feature>
<feature type="region of interest" description="Large ATPase domain (RuvB-L)" evidence="1">
    <location>
        <begin position="1"/>
        <end position="186"/>
    </location>
</feature>
<feature type="region of interest" description="Small ATPAse domain (RuvB-S)" evidence="1">
    <location>
        <begin position="187"/>
        <end position="257"/>
    </location>
</feature>
<feature type="region of interest" description="Head domain (RuvB-H)" evidence="1">
    <location>
        <begin position="260"/>
        <end position="347"/>
    </location>
</feature>
<feature type="binding site" evidence="1">
    <location>
        <position position="25"/>
    </location>
    <ligand>
        <name>ATP</name>
        <dbReference type="ChEBI" id="CHEBI:30616"/>
    </ligand>
</feature>
<feature type="binding site" evidence="1">
    <location>
        <position position="26"/>
    </location>
    <ligand>
        <name>ATP</name>
        <dbReference type="ChEBI" id="CHEBI:30616"/>
    </ligand>
</feature>
<feature type="binding site" evidence="1">
    <location>
        <position position="67"/>
    </location>
    <ligand>
        <name>ATP</name>
        <dbReference type="ChEBI" id="CHEBI:30616"/>
    </ligand>
</feature>
<feature type="binding site" evidence="1">
    <location>
        <position position="70"/>
    </location>
    <ligand>
        <name>ATP</name>
        <dbReference type="ChEBI" id="CHEBI:30616"/>
    </ligand>
</feature>
<feature type="binding site" evidence="1">
    <location>
        <position position="71"/>
    </location>
    <ligand>
        <name>ATP</name>
        <dbReference type="ChEBI" id="CHEBI:30616"/>
    </ligand>
</feature>
<feature type="binding site" evidence="1">
    <location>
        <position position="71"/>
    </location>
    <ligand>
        <name>Mg(2+)</name>
        <dbReference type="ChEBI" id="CHEBI:18420"/>
    </ligand>
</feature>
<feature type="binding site" evidence="1">
    <location>
        <position position="72"/>
    </location>
    <ligand>
        <name>ATP</name>
        <dbReference type="ChEBI" id="CHEBI:30616"/>
    </ligand>
</feature>
<feature type="binding site" evidence="1">
    <location>
        <begin position="133"/>
        <end position="135"/>
    </location>
    <ligand>
        <name>ATP</name>
        <dbReference type="ChEBI" id="CHEBI:30616"/>
    </ligand>
</feature>
<feature type="binding site" evidence="1">
    <location>
        <position position="176"/>
    </location>
    <ligand>
        <name>ATP</name>
        <dbReference type="ChEBI" id="CHEBI:30616"/>
    </ligand>
</feature>
<feature type="binding site" evidence="1">
    <location>
        <position position="186"/>
    </location>
    <ligand>
        <name>ATP</name>
        <dbReference type="ChEBI" id="CHEBI:30616"/>
    </ligand>
</feature>
<feature type="binding site" evidence="1">
    <location>
        <position position="223"/>
    </location>
    <ligand>
        <name>ATP</name>
        <dbReference type="ChEBI" id="CHEBI:30616"/>
    </ligand>
</feature>
<feature type="binding site" evidence="1">
    <location>
        <position position="315"/>
    </location>
    <ligand>
        <name>DNA</name>
        <dbReference type="ChEBI" id="CHEBI:16991"/>
    </ligand>
</feature>
<feature type="binding site" evidence="1">
    <location>
        <position position="320"/>
    </location>
    <ligand>
        <name>DNA</name>
        <dbReference type="ChEBI" id="CHEBI:16991"/>
    </ligand>
</feature>